<sequence length="150" mass="16283">MRLVIQRVSKAAVHIGGVCAGAVGPGLLILAGIEEADTEEDVRWLANKAAAMRIFSDADGKMNLSVREVSGSVLVVSQFTLHASTRKGNRPSFIRAARPERAIPLYELFKKELASLLEGRVESGEFGADMQVSLINDGPVTIFMDSRKRE</sequence>
<dbReference type="EC" id="3.1.1.96" evidence="1"/>
<dbReference type="EMBL" id="CP001071">
    <property type="protein sequence ID" value="ACD04810.1"/>
    <property type="molecule type" value="Genomic_DNA"/>
</dbReference>
<dbReference type="RefSeq" id="WP_012420025.1">
    <property type="nucleotide sequence ID" value="NZ_CP071807.1"/>
</dbReference>
<dbReference type="SMR" id="B2UQS5"/>
<dbReference type="STRING" id="349741.Amuc_0978"/>
<dbReference type="PaxDb" id="349741-Amuc_0978"/>
<dbReference type="GeneID" id="60880132"/>
<dbReference type="KEGG" id="amu:Amuc_0978"/>
<dbReference type="eggNOG" id="COG1490">
    <property type="taxonomic scope" value="Bacteria"/>
</dbReference>
<dbReference type="HOGENOM" id="CLU_076901_1_0_0"/>
<dbReference type="OrthoDB" id="9801395at2"/>
<dbReference type="BioCyc" id="AMUC349741:G1GBX-1051-MONOMER"/>
<dbReference type="Proteomes" id="UP000001031">
    <property type="component" value="Chromosome"/>
</dbReference>
<dbReference type="GO" id="GO:0005737">
    <property type="term" value="C:cytoplasm"/>
    <property type="evidence" value="ECO:0007669"/>
    <property type="project" value="UniProtKB-SubCell"/>
</dbReference>
<dbReference type="GO" id="GO:0051500">
    <property type="term" value="F:D-tyrosyl-tRNA(Tyr) deacylase activity"/>
    <property type="evidence" value="ECO:0007669"/>
    <property type="project" value="TreeGrafter"/>
</dbReference>
<dbReference type="GO" id="GO:0106026">
    <property type="term" value="F:Gly-tRNA(Ala) deacylase activity"/>
    <property type="evidence" value="ECO:0007669"/>
    <property type="project" value="UniProtKB-UniRule"/>
</dbReference>
<dbReference type="GO" id="GO:0043908">
    <property type="term" value="F:Ser(Gly)-tRNA(Ala) hydrolase activity"/>
    <property type="evidence" value="ECO:0007669"/>
    <property type="project" value="UniProtKB-UniRule"/>
</dbReference>
<dbReference type="GO" id="GO:0000049">
    <property type="term" value="F:tRNA binding"/>
    <property type="evidence" value="ECO:0007669"/>
    <property type="project" value="UniProtKB-UniRule"/>
</dbReference>
<dbReference type="GO" id="GO:0019478">
    <property type="term" value="P:D-amino acid catabolic process"/>
    <property type="evidence" value="ECO:0007669"/>
    <property type="project" value="UniProtKB-UniRule"/>
</dbReference>
<dbReference type="CDD" id="cd00563">
    <property type="entry name" value="Dtyr_deacylase"/>
    <property type="match status" value="1"/>
</dbReference>
<dbReference type="FunFam" id="3.50.80.10:FF:000001">
    <property type="entry name" value="D-aminoacyl-tRNA deacylase"/>
    <property type="match status" value="1"/>
</dbReference>
<dbReference type="Gene3D" id="3.50.80.10">
    <property type="entry name" value="D-tyrosyl-tRNA(Tyr) deacylase"/>
    <property type="match status" value="1"/>
</dbReference>
<dbReference type="HAMAP" id="MF_00518">
    <property type="entry name" value="Deacylase_Dtd"/>
    <property type="match status" value="1"/>
</dbReference>
<dbReference type="InterPro" id="IPR003732">
    <property type="entry name" value="Daa-tRNA_deacyls_DTD"/>
</dbReference>
<dbReference type="InterPro" id="IPR023509">
    <property type="entry name" value="DTD-like_sf"/>
</dbReference>
<dbReference type="NCBIfam" id="TIGR00256">
    <property type="entry name" value="D-aminoacyl-tRNA deacylase"/>
    <property type="match status" value="1"/>
</dbReference>
<dbReference type="PANTHER" id="PTHR10472:SF5">
    <property type="entry name" value="D-AMINOACYL-TRNA DEACYLASE 1"/>
    <property type="match status" value="1"/>
</dbReference>
<dbReference type="PANTHER" id="PTHR10472">
    <property type="entry name" value="D-TYROSYL-TRNA TYR DEACYLASE"/>
    <property type="match status" value="1"/>
</dbReference>
<dbReference type="Pfam" id="PF02580">
    <property type="entry name" value="Tyr_Deacylase"/>
    <property type="match status" value="1"/>
</dbReference>
<dbReference type="SUPFAM" id="SSF69500">
    <property type="entry name" value="DTD-like"/>
    <property type="match status" value="1"/>
</dbReference>
<evidence type="ECO:0000255" key="1">
    <source>
        <dbReference type="HAMAP-Rule" id="MF_00518"/>
    </source>
</evidence>
<proteinExistence type="inferred from homology"/>
<keyword id="KW-0963">Cytoplasm</keyword>
<keyword id="KW-0378">Hydrolase</keyword>
<keyword id="KW-1185">Reference proteome</keyword>
<keyword id="KW-0694">RNA-binding</keyword>
<keyword id="KW-0820">tRNA-binding</keyword>
<organism>
    <name type="scientific">Akkermansia muciniphila (strain ATCC BAA-835 / DSM 22959 / JCM 33894 / BCRC 81048 / CCUG 64013 / CIP 107961 / Muc)</name>
    <dbReference type="NCBI Taxonomy" id="349741"/>
    <lineage>
        <taxon>Bacteria</taxon>
        <taxon>Pseudomonadati</taxon>
        <taxon>Verrucomicrobiota</taxon>
        <taxon>Verrucomicrobiia</taxon>
        <taxon>Verrucomicrobiales</taxon>
        <taxon>Akkermansiaceae</taxon>
        <taxon>Akkermansia</taxon>
    </lineage>
</organism>
<name>DTD_AKKM8</name>
<protein>
    <recommendedName>
        <fullName evidence="1">D-aminoacyl-tRNA deacylase</fullName>
        <shortName evidence="1">DTD</shortName>
        <ecNumber evidence="1">3.1.1.96</ecNumber>
    </recommendedName>
    <alternativeName>
        <fullName evidence="1">Gly-tRNA(Ala) deacylase</fullName>
    </alternativeName>
</protein>
<accession>B2UQS5</accession>
<feature type="chain" id="PRO_1000127486" description="D-aminoacyl-tRNA deacylase">
    <location>
        <begin position="1"/>
        <end position="150"/>
    </location>
</feature>
<feature type="short sequence motif" description="Gly-cisPro motif, important for rejection of L-amino acids" evidence="1">
    <location>
        <begin position="138"/>
        <end position="139"/>
    </location>
</feature>
<comment type="function">
    <text evidence="1">An aminoacyl-tRNA editing enzyme that deacylates mischarged D-aminoacyl-tRNAs. Also deacylates mischarged glycyl-tRNA(Ala), protecting cells against glycine mischarging by AlaRS. Acts via tRNA-based rather than protein-based catalysis; rejects L-amino acids rather than detecting D-amino acids in the active site. By recycling D-aminoacyl-tRNA to D-amino acids and free tRNA molecules, this enzyme counteracts the toxicity associated with the formation of D-aminoacyl-tRNA entities in vivo and helps enforce protein L-homochirality.</text>
</comment>
<comment type="catalytic activity">
    <reaction evidence="1">
        <text>glycyl-tRNA(Ala) + H2O = tRNA(Ala) + glycine + H(+)</text>
        <dbReference type="Rhea" id="RHEA:53744"/>
        <dbReference type="Rhea" id="RHEA-COMP:9657"/>
        <dbReference type="Rhea" id="RHEA-COMP:13640"/>
        <dbReference type="ChEBI" id="CHEBI:15377"/>
        <dbReference type="ChEBI" id="CHEBI:15378"/>
        <dbReference type="ChEBI" id="CHEBI:57305"/>
        <dbReference type="ChEBI" id="CHEBI:78442"/>
        <dbReference type="ChEBI" id="CHEBI:78522"/>
        <dbReference type="EC" id="3.1.1.96"/>
    </reaction>
</comment>
<comment type="catalytic activity">
    <reaction evidence="1">
        <text>a D-aminoacyl-tRNA + H2O = a tRNA + a D-alpha-amino acid + H(+)</text>
        <dbReference type="Rhea" id="RHEA:13953"/>
        <dbReference type="Rhea" id="RHEA-COMP:10123"/>
        <dbReference type="Rhea" id="RHEA-COMP:10124"/>
        <dbReference type="ChEBI" id="CHEBI:15377"/>
        <dbReference type="ChEBI" id="CHEBI:15378"/>
        <dbReference type="ChEBI" id="CHEBI:59871"/>
        <dbReference type="ChEBI" id="CHEBI:78442"/>
        <dbReference type="ChEBI" id="CHEBI:79333"/>
        <dbReference type="EC" id="3.1.1.96"/>
    </reaction>
</comment>
<comment type="subunit">
    <text evidence="1">Homodimer.</text>
</comment>
<comment type="subcellular location">
    <subcellularLocation>
        <location evidence="1">Cytoplasm</location>
    </subcellularLocation>
</comment>
<comment type="domain">
    <text evidence="1">A Gly-cisPro motif from one monomer fits into the active site of the other monomer to allow specific chiral rejection of L-amino acids.</text>
</comment>
<comment type="similarity">
    <text evidence="1">Belongs to the DTD family.</text>
</comment>
<reference key="1">
    <citation type="journal article" date="2011" name="PLoS ONE">
        <title>The genome of Akkermansia muciniphila, a dedicated intestinal mucin degrader, and its use in exploring intestinal metagenomes.</title>
        <authorList>
            <person name="van Passel M.W."/>
            <person name="Kant R."/>
            <person name="Zoetendal E.G."/>
            <person name="Plugge C.M."/>
            <person name="Derrien M."/>
            <person name="Malfatti S.A."/>
            <person name="Chain P.S."/>
            <person name="Woyke T."/>
            <person name="Palva A."/>
            <person name="de Vos W.M."/>
            <person name="Smidt H."/>
        </authorList>
    </citation>
    <scope>NUCLEOTIDE SEQUENCE [LARGE SCALE GENOMIC DNA]</scope>
    <source>
        <strain>ATCC BAA-835 / DSM 22959 / JCM 33894 / BCRC 81048 / CCUG 64013 / CIP 107961 / Muc</strain>
    </source>
</reference>
<gene>
    <name evidence="1" type="primary">dtd</name>
    <name type="ordered locus">Amuc_0978</name>
</gene>